<protein>
    <recommendedName>
        <fullName>Ankyrin repeat domain-containing protein 10</fullName>
    </recommendedName>
</protein>
<gene>
    <name type="primary">ANKRD10</name>
    <name type="ORF">RCJMB04_6l10</name>
</gene>
<organism>
    <name type="scientific">Gallus gallus</name>
    <name type="common">Chicken</name>
    <dbReference type="NCBI Taxonomy" id="9031"/>
    <lineage>
        <taxon>Eukaryota</taxon>
        <taxon>Metazoa</taxon>
        <taxon>Chordata</taxon>
        <taxon>Craniata</taxon>
        <taxon>Vertebrata</taxon>
        <taxon>Euteleostomi</taxon>
        <taxon>Archelosauria</taxon>
        <taxon>Archosauria</taxon>
        <taxon>Dinosauria</taxon>
        <taxon>Saurischia</taxon>
        <taxon>Theropoda</taxon>
        <taxon>Coelurosauria</taxon>
        <taxon>Aves</taxon>
        <taxon>Neognathae</taxon>
        <taxon>Galloanserae</taxon>
        <taxon>Galliformes</taxon>
        <taxon>Phasianidae</taxon>
        <taxon>Phasianinae</taxon>
        <taxon>Gallus</taxon>
    </lineage>
</organism>
<feature type="chain" id="PRO_0000350572" description="Ankyrin repeat domain-containing protein 10">
    <location>
        <begin position="1"/>
        <end position="414"/>
    </location>
</feature>
<feature type="repeat" description="ANK 1">
    <location>
        <begin position="18"/>
        <end position="47"/>
    </location>
</feature>
<feature type="repeat" description="ANK 2">
    <location>
        <begin position="54"/>
        <end position="83"/>
    </location>
</feature>
<feature type="repeat" description="ANK 3">
    <location>
        <begin position="88"/>
        <end position="117"/>
    </location>
</feature>
<feature type="repeat" description="ANK 4">
    <location>
        <begin position="121"/>
        <end position="150"/>
    </location>
</feature>
<feature type="repeat" description="ANK 5">
    <location>
        <begin position="154"/>
        <end position="187"/>
    </location>
</feature>
<feature type="region of interest" description="Disordered" evidence="1">
    <location>
        <begin position="310"/>
        <end position="332"/>
    </location>
</feature>
<name>ANR10_CHICK</name>
<proteinExistence type="evidence at transcript level"/>
<dbReference type="EMBL" id="AJ719808">
    <property type="protein sequence ID" value="CAG31467.1"/>
    <property type="molecule type" value="mRNA"/>
</dbReference>
<dbReference type="RefSeq" id="NP_001025986.1">
    <property type="nucleotide sequence ID" value="NM_001030815.3"/>
</dbReference>
<dbReference type="SMR" id="Q5ZLC6"/>
<dbReference type="BioGRID" id="679954">
    <property type="interactions" value="1"/>
</dbReference>
<dbReference type="FunCoup" id="Q5ZLC6">
    <property type="interactions" value="1546"/>
</dbReference>
<dbReference type="STRING" id="9031.ENSGALP00000049343"/>
<dbReference type="PaxDb" id="9031-ENSGALP00000027169"/>
<dbReference type="Ensembl" id="ENSGALT00010031432.1">
    <property type="protein sequence ID" value="ENSGALP00010018348.1"/>
    <property type="gene ID" value="ENSGALG00010013110.1"/>
</dbReference>
<dbReference type="GeneID" id="418760"/>
<dbReference type="KEGG" id="gga:418760"/>
<dbReference type="CTD" id="55608"/>
<dbReference type="VEuPathDB" id="HostDB:geneid_418760"/>
<dbReference type="eggNOG" id="KOG0504">
    <property type="taxonomic scope" value="Eukaryota"/>
</dbReference>
<dbReference type="GeneTree" id="ENSGT00940000156564"/>
<dbReference type="HOGENOM" id="CLU_052448_0_0_1"/>
<dbReference type="InParanoid" id="Q5ZLC6"/>
<dbReference type="OrthoDB" id="5402602at2759"/>
<dbReference type="PhylomeDB" id="Q5ZLC6"/>
<dbReference type="PRO" id="PR:Q5ZLC6"/>
<dbReference type="Proteomes" id="UP000000539">
    <property type="component" value="Chromosome 1"/>
</dbReference>
<dbReference type="Bgee" id="ENSGALG00000030125">
    <property type="expression patterns" value="Expressed in ovary and 13 other cell types or tissues"/>
</dbReference>
<dbReference type="GO" id="GO:0030941">
    <property type="term" value="F:chloroplast targeting sequence binding"/>
    <property type="evidence" value="ECO:0000318"/>
    <property type="project" value="GO_Central"/>
</dbReference>
<dbReference type="GO" id="GO:0045036">
    <property type="term" value="P:protein targeting to chloroplast"/>
    <property type="evidence" value="ECO:0000318"/>
    <property type="project" value="GO_Central"/>
</dbReference>
<dbReference type="Gene3D" id="1.25.40.20">
    <property type="entry name" value="Ankyrin repeat-containing domain"/>
    <property type="match status" value="2"/>
</dbReference>
<dbReference type="InterPro" id="IPR050776">
    <property type="entry name" value="Ank_Repeat/CDKN_Inhibitor"/>
</dbReference>
<dbReference type="InterPro" id="IPR002110">
    <property type="entry name" value="Ankyrin_rpt"/>
</dbReference>
<dbReference type="InterPro" id="IPR036770">
    <property type="entry name" value="Ankyrin_rpt-contain_sf"/>
</dbReference>
<dbReference type="PANTHER" id="PTHR24201">
    <property type="entry name" value="ANK_REP_REGION DOMAIN-CONTAINING PROTEIN"/>
    <property type="match status" value="1"/>
</dbReference>
<dbReference type="PANTHER" id="PTHR24201:SF12">
    <property type="entry name" value="ANKYRIN REPEAT DOMAIN 10"/>
    <property type="match status" value="1"/>
</dbReference>
<dbReference type="Pfam" id="PF12796">
    <property type="entry name" value="Ank_2"/>
    <property type="match status" value="1"/>
</dbReference>
<dbReference type="Pfam" id="PF13637">
    <property type="entry name" value="Ank_4"/>
    <property type="match status" value="1"/>
</dbReference>
<dbReference type="SMART" id="SM00248">
    <property type="entry name" value="ANK"/>
    <property type="match status" value="4"/>
</dbReference>
<dbReference type="SUPFAM" id="SSF48403">
    <property type="entry name" value="Ankyrin repeat"/>
    <property type="match status" value="1"/>
</dbReference>
<dbReference type="PROSITE" id="PS50297">
    <property type="entry name" value="ANK_REP_REGION"/>
    <property type="match status" value="1"/>
</dbReference>
<dbReference type="PROSITE" id="PS50088">
    <property type="entry name" value="ANK_REPEAT"/>
    <property type="match status" value="3"/>
</dbReference>
<reference key="1">
    <citation type="journal article" date="2005" name="Genome Biol.">
        <title>Full-length cDNAs from chicken bursal lymphocytes to facilitate gene function analysis.</title>
        <authorList>
            <person name="Caldwell R.B."/>
            <person name="Kierzek A.M."/>
            <person name="Arakawa H."/>
            <person name="Bezzubov Y."/>
            <person name="Zaim J."/>
            <person name="Fiedler P."/>
            <person name="Kutter S."/>
            <person name="Blagodatski A."/>
            <person name="Kostovska D."/>
            <person name="Koter M."/>
            <person name="Plachy J."/>
            <person name="Carninci P."/>
            <person name="Hayashizaki Y."/>
            <person name="Buerstedde J.-M."/>
        </authorList>
    </citation>
    <scope>NUCLEOTIDE SEQUENCE [LARGE SCALE MRNA]</scope>
    <source>
        <strain>CB</strain>
        <tissue>Bursa of Fabricius</tissue>
    </source>
</reference>
<accession>Q5ZLC6</accession>
<sequence>MSLGAGPEAGFSSEELLTLRFPLHRACRDGDLPALCALLQSAPRSDLAAEDSFYGWTPIHWAAHFGKLECLMQLVRAGASVNASTTRFAQTPAHIAAFGGHPQCLNWLIQVGANINKQDYVGETPIHKAARSGSVDSISALVAHGAQIDLRNASGLTAADLAHTQGFQECAQFLLNLQNCHLNRYYSNGTLNGGHRNAGPNPFSGGTSRKRSFEDVESAGVKKARTEAYSFDGLIPMMNGGVEDDADNMHVDREFAVVSDMNSSSSILNALTNGCAMNGHLDFTAAQQLSGMDTRQEECLTLAPNGIIPGVTSPSRHRIHTSNGTEEPEKAMNNPTDMCGSLHLNGSPSSCVSNRPSWVEDPGDTLHYGHYHGFGDTAESIPELSSVVEHSNSVKVEQRYDNTVLGTMYLYHGS</sequence>
<keyword id="KW-0040">ANK repeat</keyword>
<keyword id="KW-1185">Reference proteome</keyword>
<keyword id="KW-0677">Repeat</keyword>
<evidence type="ECO:0000256" key="1">
    <source>
        <dbReference type="SAM" id="MobiDB-lite"/>
    </source>
</evidence>